<organism>
    <name type="scientific">Streptococcus mutans serotype c (strain ATCC 700610 / UA159)</name>
    <dbReference type="NCBI Taxonomy" id="210007"/>
    <lineage>
        <taxon>Bacteria</taxon>
        <taxon>Bacillati</taxon>
        <taxon>Bacillota</taxon>
        <taxon>Bacilli</taxon>
        <taxon>Lactobacillales</taxon>
        <taxon>Streptococcaceae</taxon>
        <taxon>Streptococcus</taxon>
    </lineage>
</organism>
<evidence type="ECO:0000305" key="1"/>
<evidence type="ECO:0007829" key="2">
    <source>
        <dbReference type="PDB" id="5FBM"/>
    </source>
</evidence>
<feature type="chain" id="PRO_0000104980" description="DNA-binding protein HU">
    <location>
        <begin position="1"/>
        <end position="91"/>
    </location>
</feature>
<feature type="helix" evidence="2">
    <location>
        <begin position="4"/>
        <end position="15"/>
    </location>
</feature>
<feature type="helix" evidence="2">
    <location>
        <begin position="19"/>
        <end position="38"/>
    </location>
</feature>
<feature type="strand" evidence="2">
    <location>
        <begin position="43"/>
        <end position="45"/>
    </location>
</feature>
<feature type="turn" evidence="2">
    <location>
        <begin position="46"/>
        <end position="48"/>
    </location>
</feature>
<feature type="strand" evidence="2">
    <location>
        <begin position="49"/>
        <end position="56"/>
    </location>
</feature>
<feature type="strand" evidence="2">
    <location>
        <begin position="75"/>
        <end position="82"/>
    </location>
</feature>
<feature type="helix" evidence="2">
    <location>
        <begin position="84"/>
        <end position="91"/>
    </location>
</feature>
<keyword id="KW-0002">3D-structure</keyword>
<keyword id="KW-0226">DNA condensation</keyword>
<keyword id="KW-0238">DNA-binding</keyword>
<keyword id="KW-1185">Reference proteome</keyword>
<keyword id="KW-0843">Virulence</keyword>
<sequence>MANKQDLIAKVAEATELTKKDSAAAVDAVFSAVSSYLAKGEKVQLIGFGNFEVRERAARKGRNPQTGEEIKIKASKVPAFKAGKALKDAVK</sequence>
<name>DBH_STRMU</name>
<protein>
    <recommendedName>
        <fullName>DNA-binding protein HU</fullName>
    </recommendedName>
</protein>
<dbReference type="EMBL" id="L40355">
    <property type="protein sequence ID" value="AAD40810.1"/>
    <property type="molecule type" value="Genomic_DNA"/>
</dbReference>
<dbReference type="EMBL" id="AE014133">
    <property type="protein sequence ID" value="AAN58328.1"/>
    <property type="molecule type" value="Genomic_DNA"/>
</dbReference>
<dbReference type="RefSeq" id="NP_721022.1">
    <property type="nucleotide sequence ID" value="NC_004350.2"/>
</dbReference>
<dbReference type="RefSeq" id="WP_002262099.1">
    <property type="nucleotide sequence ID" value="NC_004350.2"/>
</dbReference>
<dbReference type="PDB" id="5FBM">
    <property type="method" value="X-ray"/>
    <property type="resolution" value="1.90 A"/>
    <property type="chains" value="A/B=1-91"/>
</dbReference>
<dbReference type="PDBsum" id="5FBM"/>
<dbReference type="SMR" id="Q9XB21"/>
<dbReference type="STRING" id="210007.SMU_589"/>
<dbReference type="KEGG" id="smu:SMU_589"/>
<dbReference type="PATRIC" id="fig|210007.7.peg.522"/>
<dbReference type="eggNOG" id="COG0776">
    <property type="taxonomic scope" value="Bacteria"/>
</dbReference>
<dbReference type="HOGENOM" id="CLU_105066_3_1_9"/>
<dbReference type="OrthoDB" id="9799835at2"/>
<dbReference type="PhylomeDB" id="Q9XB21"/>
<dbReference type="Proteomes" id="UP000002512">
    <property type="component" value="Chromosome"/>
</dbReference>
<dbReference type="GO" id="GO:0005829">
    <property type="term" value="C:cytosol"/>
    <property type="evidence" value="ECO:0007669"/>
    <property type="project" value="TreeGrafter"/>
</dbReference>
<dbReference type="GO" id="GO:0003677">
    <property type="term" value="F:DNA binding"/>
    <property type="evidence" value="ECO:0007669"/>
    <property type="project" value="UniProtKB-KW"/>
</dbReference>
<dbReference type="GO" id="GO:0030527">
    <property type="term" value="F:structural constituent of chromatin"/>
    <property type="evidence" value="ECO:0007669"/>
    <property type="project" value="InterPro"/>
</dbReference>
<dbReference type="GO" id="GO:0030261">
    <property type="term" value="P:chromosome condensation"/>
    <property type="evidence" value="ECO:0007669"/>
    <property type="project" value="UniProtKB-KW"/>
</dbReference>
<dbReference type="CDD" id="cd13831">
    <property type="entry name" value="HU"/>
    <property type="match status" value="1"/>
</dbReference>
<dbReference type="FunFam" id="4.10.520.10:FF:000001">
    <property type="entry name" value="DNA-binding protein HU"/>
    <property type="match status" value="1"/>
</dbReference>
<dbReference type="Gene3D" id="4.10.520.10">
    <property type="entry name" value="IHF-like DNA-binding proteins"/>
    <property type="match status" value="1"/>
</dbReference>
<dbReference type="InterPro" id="IPR000119">
    <property type="entry name" value="Hist_DNA-bd"/>
</dbReference>
<dbReference type="InterPro" id="IPR020816">
    <property type="entry name" value="Histone-like_DNA-bd_CS"/>
</dbReference>
<dbReference type="InterPro" id="IPR010992">
    <property type="entry name" value="IHF-like_DNA-bd_dom_sf"/>
</dbReference>
<dbReference type="PANTHER" id="PTHR33175">
    <property type="entry name" value="DNA-BINDING PROTEIN HU"/>
    <property type="match status" value="1"/>
</dbReference>
<dbReference type="PANTHER" id="PTHR33175:SF3">
    <property type="entry name" value="DNA-BINDING PROTEIN HU-BETA"/>
    <property type="match status" value="1"/>
</dbReference>
<dbReference type="Pfam" id="PF00216">
    <property type="entry name" value="Bac_DNA_binding"/>
    <property type="match status" value="1"/>
</dbReference>
<dbReference type="PRINTS" id="PR01727">
    <property type="entry name" value="DNABINDINGHU"/>
</dbReference>
<dbReference type="SMART" id="SM00411">
    <property type="entry name" value="BHL"/>
    <property type="match status" value="1"/>
</dbReference>
<dbReference type="SUPFAM" id="SSF47729">
    <property type="entry name" value="IHF-like DNA-binding proteins"/>
    <property type="match status" value="1"/>
</dbReference>
<dbReference type="PROSITE" id="PS00045">
    <property type="entry name" value="HISTONE_LIKE"/>
    <property type="match status" value="1"/>
</dbReference>
<gene>
    <name type="primary">hup</name>
    <name type="synonym">hlpA</name>
    <name type="ordered locus">SMU_589</name>
</gene>
<comment type="function">
    <text>Histone-like DNA-binding protein which is capable of wrapping DNA to stabilize it, and thus to prevent its denaturation under extreme environmental conditions. Also seems to act as a fortuitous virulence factor in delayed sequelae by binding to heparan sulfate-proteoglycans in the extracellular matrix of target organs and acting as a nidus for in situ immune complex formation.</text>
</comment>
<comment type="similarity">
    <text evidence="1">Belongs to the bacterial histone-like protein family.</text>
</comment>
<reference key="1">
    <citation type="journal article" date="1998" name="Infect. Immun.">
        <title>Streptococcal histone-like protein: primary structure of hlpA and protein binding to lipoteichoic acid and epithelial cells.</title>
        <authorList>
            <person name="Stinson M.W."/>
            <person name="McLaughlin R."/>
            <person name="Choi S.H."/>
            <person name="Juarez Z.E."/>
            <person name="Barnard J."/>
        </authorList>
    </citation>
    <scope>NUCLEOTIDE SEQUENCE [GENOMIC DNA]</scope>
</reference>
<reference key="2">
    <citation type="journal article" date="2002" name="Proc. Natl. Acad. Sci. U.S.A.">
        <title>Genome sequence of Streptococcus mutans UA159, a cariogenic dental pathogen.</title>
        <authorList>
            <person name="Ajdic D.J."/>
            <person name="McShan W.M."/>
            <person name="McLaughlin R.E."/>
            <person name="Savic G."/>
            <person name="Chang J."/>
            <person name="Carson M.B."/>
            <person name="Primeaux C."/>
            <person name="Tian R."/>
            <person name="Kenton S."/>
            <person name="Jia H.G."/>
            <person name="Lin S.P."/>
            <person name="Qian Y."/>
            <person name="Li S."/>
            <person name="Zhu H."/>
            <person name="Najar F.Z."/>
            <person name="Lai H."/>
            <person name="White J."/>
            <person name="Roe B.A."/>
            <person name="Ferretti J.J."/>
        </authorList>
    </citation>
    <scope>NUCLEOTIDE SEQUENCE [LARGE SCALE GENOMIC DNA]</scope>
    <source>
        <strain>ATCC 700610 / UA159</strain>
    </source>
</reference>
<accession>Q9XB21</accession>
<proteinExistence type="evidence at protein level"/>